<keyword id="KW-0597">Phosphoprotein</keyword>
<keyword id="KW-1185">Reference proteome</keyword>
<comment type="function">
    <text>Binds to SIN3.</text>
</comment>
<comment type="miscellaneous">
    <text evidence="2">Present with 211 molecules/cell in log phase SD medium.</text>
</comment>
<comment type="similarity">
    <text evidence="3">To yeast STB2.</text>
</comment>
<name>STB6_YEAST</name>
<organism>
    <name type="scientific">Saccharomyces cerevisiae (strain ATCC 204508 / S288c)</name>
    <name type="common">Baker's yeast</name>
    <dbReference type="NCBI Taxonomy" id="559292"/>
    <lineage>
        <taxon>Eukaryota</taxon>
        <taxon>Fungi</taxon>
        <taxon>Dikarya</taxon>
        <taxon>Ascomycota</taxon>
        <taxon>Saccharomycotina</taxon>
        <taxon>Saccharomycetes</taxon>
        <taxon>Saccharomycetales</taxon>
        <taxon>Saccharomycetaceae</taxon>
        <taxon>Saccharomyces</taxon>
    </lineage>
</organism>
<proteinExistence type="evidence at protein level"/>
<dbReference type="EMBL" id="X75780">
    <property type="protein sequence ID" value="CAA53402.1"/>
    <property type="molecule type" value="Genomic_DNA"/>
</dbReference>
<dbReference type="EMBL" id="Z28072">
    <property type="protein sequence ID" value="CAA81909.1"/>
    <property type="molecule type" value="Genomic_DNA"/>
</dbReference>
<dbReference type="EMBL" id="BK006944">
    <property type="protein sequence ID" value="DAA09084.1"/>
    <property type="molecule type" value="Genomic_DNA"/>
</dbReference>
<dbReference type="PIR" id="S37894">
    <property type="entry name" value="S37894"/>
</dbReference>
<dbReference type="RefSeq" id="NP_012851.1">
    <property type="nucleotide sequence ID" value="NM_001179638.1"/>
</dbReference>
<dbReference type="SMR" id="P36085"/>
<dbReference type="BioGRID" id="34059">
    <property type="interactions" value="44"/>
</dbReference>
<dbReference type="DIP" id="DIP-2488N"/>
<dbReference type="FunCoup" id="P36085">
    <property type="interactions" value="54"/>
</dbReference>
<dbReference type="IntAct" id="P36085">
    <property type="interactions" value="9"/>
</dbReference>
<dbReference type="MINT" id="P36085"/>
<dbReference type="STRING" id="4932.YKL072W"/>
<dbReference type="iPTMnet" id="P36085"/>
<dbReference type="PaxDb" id="4932-YKL072W"/>
<dbReference type="PeptideAtlas" id="P36085"/>
<dbReference type="EnsemblFungi" id="YKL072W_mRNA">
    <property type="protein sequence ID" value="YKL072W"/>
    <property type="gene ID" value="YKL072W"/>
</dbReference>
<dbReference type="GeneID" id="853790"/>
<dbReference type="KEGG" id="sce:YKL072W"/>
<dbReference type="AGR" id="SGD:S000001555"/>
<dbReference type="SGD" id="S000001555">
    <property type="gene designation" value="STB6"/>
</dbReference>
<dbReference type="VEuPathDB" id="FungiDB:YKL072W"/>
<dbReference type="eggNOG" id="ENOG502QT8Q">
    <property type="taxonomic scope" value="Eukaryota"/>
</dbReference>
<dbReference type="GeneTree" id="ENSGT00940000176579"/>
<dbReference type="HOGENOM" id="CLU_010065_0_0_1"/>
<dbReference type="InParanoid" id="P36085"/>
<dbReference type="OMA" id="GDIREVW"/>
<dbReference type="OrthoDB" id="19806at2759"/>
<dbReference type="BioCyc" id="YEAST:G3O-31868-MONOMER"/>
<dbReference type="BioGRID-ORCS" id="853790">
    <property type="hits" value="0 hits in 10 CRISPR screens"/>
</dbReference>
<dbReference type="PRO" id="PR:P36085"/>
<dbReference type="Proteomes" id="UP000002311">
    <property type="component" value="Chromosome XI"/>
</dbReference>
<dbReference type="RNAct" id="P36085">
    <property type="molecule type" value="protein"/>
</dbReference>
<dbReference type="GO" id="GO:0070822">
    <property type="term" value="C:Sin3-type complex"/>
    <property type="evidence" value="ECO:0000318"/>
    <property type="project" value="GO_Central"/>
</dbReference>
<dbReference type="InterPro" id="IPR038919">
    <property type="entry name" value="Stb2/Stb6"/>
</dbReference>
<dbReference type="PANTHER" id="PTHR31011">
    <property type="entry name" value="PROTEIN STB2-RELATED"/>
    <property type="match status" value="1"/>
</dbReference>
<dbReference type="PANTHER" id="PTHR31011:SF2">
    <property type="entry name" value="PROTEIN STB2-RELATED"/>
    <property type="match status" value="1"/>
</dbReference>
<reference key="1">
    <citation type="journal article" date="1994" name="Yeast">
        <title>Sequence of a 20.7 kb region of yeast chromosome XI includes the NUP100 gene, an open reading frame (ORF) possibly representing a nucleoside diphosphate kinase gene, tRNAs for His, Val and Trp in addition to seven ORFs with weak or no significant similarity to known proteins.</title>
        <authorList>
            <person name="Rasmussen S.W."/>
        </authorList>
    </citation>
    <scope>NUCLEOTIDE SEQUENCE [GENOMIC DNA]</scope>
    <source>
        <strain>ATCC 204508 / S288c</strain>
    </source>
</reference>
<reference key="2">
    <citation type="journal article" date="1994" name="Nature">
        <title>Complete DNA sequence of yeast chromosome XI.</title>
        <authorList>
            <person name="Dujon B."/>
            <person name="Alexandraki D."/>
            <person name="Andre B."/>
            <person name="Ansorge W."/>
            <person name="Baladron V."/>
            <person name="Ballesta J.P.G."/>
            <person name="Banrevi A."/>
            <person name="Bolle P.-A."/>
            <person name="Bolotin-Fukuhara M."/>
            <person name="Bossier P."/>
            <person name="Bou G."/>
            <person name="Boyer J."/>
            <person name="Buitrago M.J."/>
            <person name="Cheret G."/>
            <person name="Colleaux L."/>
            <person name="Daignan-Fornier B."/>
            <person name="del Rey F."/>
            <person name="Dion C."/>
            <person name="Domdey H."/>
            <person name="Duesterhoeft A."/>
            <person name="Duesterhus S."/>
            <person name="Entian K.-D."/>
            <person name="Erfle H."/>
            <person name="Esteban P.F."/>
            <person name="Feldmann H."/>
            <person name="Fernandes L."/>
            <person name="Fobo G.M."/>
            <person name="Fritz C."/>
            <person name="Fukuhara H."/>
            <person name="Gabel C."/>
            <person name="Gaillon L."/>
            <person name="Garcia-Cantalejo J.M."/>
            <person name="Garcia-Ramirez J.J."/>
            <person name="Gent M.E."/>
            <person name="Ghazvini M."/>
            <person name="Goffeau A."/>
            <person name="Gonzalez A."/>
            <person name="Grothues D."/>
            <person name="Guerreiro P."/>
            <person name="Hegemann J.H."/>
            <person name="Hewitt N."/>
            <person name="Hilger F."/>
            <person name="Hollenberg C.P."/>
            <person name="Horaitis O."/>
            <person name="Indge K.J."/>
            <person name="Jacquier A."/>
            <person name="James C.M."/>
            <person name="Jauniaux J.-C."/>
            <person name="Jimenez A."/>
            <person name="Keuchel H."/>
            <person name="Kirchrath L."/>
            <person name="Kleine K."/>
            <person name="Koetter P."/>
            <person name="Legrain P."/>
            <person name="Liebl S."/>
            <person name="Louis E.J."/>
            <person name="Maia e Silva A."/>
            <person name="Marck C."/>
            <person name="Monnier A.-L."/>
            <person name="Moestl D."/>
            <person name="Mueller S."/>
            <person name="Obermaier B."/>
            <person name="Oliver S.G."/>
            <person name="Pallier C."/>
            <person name="Pascolo S."/>
            <person name="Pfeiffer F."/>
            <person name="Philippsen P."/>
            <person name="Planta R.J."/>
            <person name="Pohl F.M."/>
            <person name="Pohl T.M."/>
            <person name="Poehlmann R."/>
            <person name="Portetelle D."/>
            <person name="Purnelle B."/>
            <person name="Puzos V."/>
            <person name="Ramezani Rad M."/>
            <person name="Rasmussen S.W."/>
            <person name="Remacha M.A."/>
            <person name="Revuelta J.L."/>
            <person name="Richard G.-F."/>
            <person name="Rieger M."/>
            <person name="Rodrigues-Pousada C."/>
            <person name="Rose M."/>
            <person name="Rupp T."/>
            <person name="Santos M.A."/>
            <person name="Schwager C."/>
            <person name="Sensen C."/>
            <person name="Skala J."/>
            <person name="Soares H."/>
            <person name="Sor F."/>
            <person name="Stegemann J."/>
            <person name="Tettelin H."/>
            <person name="Thierry A."/>
            <person name="Tzermia M."/>
            <person name="Urrestarazu L.A."/>
            <person name="van Dyck L."/>
            <person name="van Vliet-Reedijk J.C."/>
            <person name="Valens M."/>
            <person name="Vandenbol M."/>
            <person name="Vilela C."/>
            <person name="Vissers S."/>
            <person name="von Wettstein D."/>
            <person name="Voss H."/>
            <person name="Wiemann S."/>
            <person name="Xu G."/>
            <person name="Zimmermann J."/>
            <person name="Haasemann M."/>
            <person name="Becker I."/>
            <person name="Mewes H.-W."/>
        </authorList>
    </citation>
    <scope>NUCLEOTIDE SEQUENCE [LARGE SCALE GENOMIC DNA]</scope>
    <source>
        <strain>ATCC 204508 / S288c</strain>
    </source>
</reference>
<reference key="3">
    <citation type="journal article" date="2014" name="G3 (Bethesda)">
        <title>The reference genome sequence of Saccharomyces cerevisiae: Then and now.</title>
        <authorList>
            <person name="Engel S.R."/>
            <person name="Dietrich F.S."/>
            <person name="Fisk D.G."/>
            <person name="Binkley G."/>
            <person name="Balakrishnan R."/>
            <person name="Costanzo M.C."/>
            <person name="Dwight S.S."/>
            <person name="Hitz B.C."/>
            <person name="Karra K."/>
            <person name="Nash R.S."/>
            <person name="Weng S."/>
            <person name="Wong E.D."/>
            <person name="Lloyd P."/>
            <person name="Skrzypek M.S."/>
            <person name="Miyasato S.R."/>
            <person name="Simison M."/>
            <person name="Cherry J.M."/>
        </authorList>
    </citation>
    <scope>GENOME REANNOTATION</scope>
    <source>
        <strain>ATCC 204508 / S288c</strain>
    </source>
</reference>
<reference key="4">
    <citation type="journal article" date="1997" name="Mol. Gen. Genet.">
        <title>Identification of the Saccharomyces cerevisiae genes STB1-STB5 encoding Sin3p binding proteins.</title>
        <authorList>
            <person name="Kasten M.M."/>
            <person name="Stillman D.J."/>
        </authorList>
    </citation>
    <scope>CHARACTERIZATION</scope>
</reference>
<reference key="5">
    <citation type="journal article" date="2003" name="Nature">
        <title>Global analysis of protein expression in yeast.</title>
        <authorList>
            <person name="Ghaemmaghami S."/>
            <person name="Huh W.-K."/>
            <person name="Bower K."/>
            <person name="Howson R.W."/>
            <person name="Belle A."/>
            <person name="Dephoure N."/>
            <person name="O'Shea E.K."/>
            <person name="Weissman J.S."/>
        </authorList>
    </citation>
    <scope>LEVEL OF PROTEIN EXPRESSION [LARGE SCALE ANALYSIS]</scope>
</reference>
<reference key="6">
    <citation type="journal article" date="2008" name="Mol. Cell. Proteomics">
        <title>A multidimensional chromatography technology for in-depth phosphoproteome analysis.</title>
        <authorList>
            <person name="Albuquerque C.P."/>
            <person name="Smolka M.B."/>
            <person name="Payne S.H."/>
            <person name="Bafna V."/>
            <person name="Eng J."/>
            <person name="Zhou H."/>
        </authorList>
    </citation>
    <scope>PHOSPHORYLATION [LARGE SCALE ANALYSIS] AT SER-514</scope>
    <scope>IDENTIFICATION BY MASS SPECTROMETRY [LARGE SCALE ANALYSIS]</scope>
</reference>
<reference key="7">
    <citation type="journal article" date="2009" name="Science">
        <title>Global analysis of Cdk1 substrate phosphorylation sites provides insights into evolution.</title>
        <authorList>
            <person name="Holt L.J."/>
            <person name="Tuch B.B."/>
            <person name="Villen J."/>
            <person name="Johnson A.D."/>
            <person name="Gygi S.P."/>
            <person name="Morgan D.O."/>
        </authorList>
    </citation>
    <scope>PHOSPHORYLATION [LARGE SCALE ANALYSIS] AT SER-514</scope>
    <scope>IDENTIFICATION BY MASS SPECTROMETRY [LARGE SCALE ANALYSIS]</scope>
</reference>
<protein>
    <recommendedName>
        <fullName>Protein STB6</fullName>
    </recommendedName>
</protein>
<evidence type="ECO:0000256" key="1">
    <source>
        <dbReference type="SAM" id="MobiDB-lite"/>
    </source>
</evidence>
<evidence type="ECO:0000269" key="2">
    <source>
    </source>
</evidence>
<evidence type="ECO:0000305" key="3"/>
<evidence type="ECO:0007744" key="4">
    <source>
    </source>
</evidence>
<evidence type="ECO:0007744" key="5">
    <source>
    </source>
</evidence>
<gene>
    <name type="primary">STB6</name>
    <name type="ordered locus">YKL072W</name>
    <name type="ORF">YKL352</name>
</gene>
<feature type="chain" id="PRO_0000072255" description="Protein STB6">
    <location>
        <begin position="1"/>
        <end position="766"/>
    </location>
</feature>
<feature type="region of interest" description="Disordered" evidence="1">
    <location>
        <begin position="447"/>
        <end position="469"/>
    </location>
</feature>
<feature type="modified residue" description="Phosphoserine" evidence="4 5">
    <location>
        <position position="514"/>
    </location>
</feature>
<sequence length="766" mass="88836">MQLEATHQKENHLSPLASFIFPDFRALFNIGFNLYSNINYKEVDINGFEIYIVEQWAAQRKISTLITSYTGNLQDTISAVEVALPEDPEEWPCCLKKYHEELLKFSSPKKTAKGTLFVTNLSSFKSTLNLLHVECGNLKKIWKNFKTNYDLKRLHCGGRSAQLLKKTPSASIAKFAQLYKFPNSAFSHEITSDFQQPSLQNDNSSISSIENIPVNHCPVVELTTLVQISLSYFALFEYKKERDGLLCNGTKQSLEKWWEIYGKRYHGIDKPKNETILGPTTVASLLSLVLTCYFKLMVEDCMSAKDPFDEEEFYSGLYAFQKKYGLSKNNKQTSLDELTIDKLFEVSSKTSNKDIFKFKKVVKSTVQDMTGKGNFMHLSNEILTTDLDTLVKNIHGGSLGKLWKGRSASRKETCMVWERKTFLSFKFERGDPSLQLENNELFYGTSVPSEQLTTSNKEDSDTQPTKRNSIYDIANGSKSSLSISSMFCNYDETRYKSTNNLNRAYRGEYFRRNSIPFCNDGIHDTKKISADLNKIDGLYRCNSYSEVQNAIELWSLPFDSSVIRLARDLLKIQSLMSVQRQLDEIRDGYLGKNSQRSYQNDLMFRQSLNKLQEMCERCKRGSNEFHWEYGNMQNKQQILESEKKDMKSLSSKLKYNVRILDRRVRDVEASVDHFDRKLEDVRKKLLEQNNSKDISMALESPCDKFEFDSFMDSIVQSQQTKYEGLCFKILDKKSLRKLKKEFWKWSTWTFDTFLYKNRPNKEKDTL</sequence>
<accession>P36085</accession>
<accession>D6VXL4</accession>